<feature type="chain" id="PRO_0000140469" description="(R)-citramalate synthase">
    <location>
        <begin position="1"/>
        <end position="528"/>
    </location>
</feature>
<feature type="domain" description="Pyruvate carboxyltransferase" evidence="2">
    <location>
        <begin position="5"/>
        <end position="271"/>
    </location>
</feature>
<name>CIMA_AQUAE</name>
<evidence type="ECO:0000250" key="1">
    <source>
        <dbReference type="UniProtKB" id="Q74C76"/>
    </source>
</evidence>
<evidence type="ECO:0000255" key="2">
    <source>
        <dbReference type="PROSITE-ProRule" id="PRU01151"/>
    </source>
</evidence>
<evidence type="ECO:0000305" key="3"/>
<proteinExistence type="inferred from homology"/>
<protein>
    <recommendedName>
        <fullName evidence="3">(R)-citramalate synthase</fullName>
        <ecNumber evidence="1">2.3.3.21</ecNumber>
    </recommendedName>
</protein>
<dbReference type="EC" id="2.3.3.21" evidence="1"/>
<dbReference type="EMBL" id="AE000657">
    <property type="protein sequence ID" value="AAC06637.1"/>
    <property type="molecule type" value="Genomic_DNA"/>
</dbReference>
<dbReference type="PIR" id="F70331">
    <property type="entry name" value="F70331"/>
</dbReference>
<dbReference type="RefSeq" id="NP_213242.1">
    <property type="nucleotide sequence ID" value="NC_000918.1"/>
</dbReference>
<dbReference type="RefSeq" id="WP_010880180.1">
    <property type="nucleotide sequence ID" value="NC_000918.1"/>
</dbReference>
<dbReference type="SMR" id="O66682"/>
<dbReference type="STRING" id="224324.aq_356"/>
<dbReference type="EnsemblBacteria" id="AAC06637">
    <property type="protein sequence ID" value="AAC06637"/>
    <property type="gene ID" value="aq_356"/>
</dbReference>
<dbReference type="KEGG" id="aae:aq_356"/>
<dbReference type="PATRIC" id="fig|224324.8.peg.286"/>
<dbReference type="eggNOG" id="COG0119">
    <property type="taxonomic scope" value="Bacteria"/>
</dbReference>
<dbReference type="HOGENOM" id="CLU_022158_7_0_0"/>
<dbReference type="InParanoid" id="O66682"/>
<dbReference type="OrthoDB" id="9804858at2"/>
<dbReference type="UniPathway" id="UPA00047">
    <property type="reaction ID" value="UER00066"/>
</dbReference>
<dbReference type="Proteomes" id="UP000000798">
    <property type="component" value="Chromosome"/>
</dbReference>
<dbReference type="GO" id="GO:0043714">
    <property type="term" value="F:(R)-citramalate synthase activity"/>
    <property type="evidence" value="ECO:0007669"/>
    <property type="project" value="RHEA"/>
</dbReference>
<dbReference type="GO" id="GO:0003852">
    <property type="term" value="F:2-isopropylmalate synthase activity"/>
    <property type="evidence" value="ECO:0007669"/>
    <property type="project" value="InterPro"/>
</dbReference>
<dbReference type="GO" id="GO:0009097">
    <property type="term" value="P:isoleucine biosynthetic process"/>
    <property type="evidence" value="ECO:0007669"/>
    <property type="project" value="UniProtKB-UniPathway"/>
</dbReference>
<dbReference type="GO" id="GO:0009098">
    <property type="term" value="P:L-leucine biosynthetic process"/>
    <property type="evidence" value="ECO:0007669"/>
    <property type="project" value="InterPro"/>
</dbReference>
<dbReference type="CDD" id="cd07941">
    <property type="entry name" value="DRE_TIM_LeuA3"/>
    <property type="match status" value="1"/>
</dbReference>
<dbReference type="Gene3D" id="1.10.238.260">
    <property type="match status" value="1"/>
</dbReference>
<dbReference type="Gene3D" id="3.30.160.270">
    <property type="match status" value="1"/>
</dbReference>
<dbReference type="Gene3D" id="3.20.20.70">
    <property type="entry name" value="Aldolase class I"/>
    <property type="match status" value="1"/>
</dbReference>
<dbReference type="InterPro" id="IPR013709">
    <property type="entry name" value="2-isopropylmalate_synth_dimer"/>
</dbReference>
<dbReference type="InterPro" id="IPR002034">
    <property type="entry name" value="AIPM/Hcit_synth_CS"/>
</dbReference>
<dbReference type="InterPro" id="IPR013785">
    <property type="entry name" value="Aldolase_TIM"/>
</dbReference>
<dbReference type="InterPro" id="IPR005675">
    <property type="entry name" value="Citramal_synthase"/>
</dbReference>
<dbReference type="InterPro" id="IPR054691">
    <property type="entry name" value="LeuA/HCS_post-cat"/>
</dbReference>
<dbReference type="InterPro" id="IPR036230">
    <property type="entry name" value="LeuA_allosteric_dom_sf"/>
</dbReference>
<dbReference type="InterPro" id="IPR000891">
    <property type="entry name" value="PYR_CT"/>
</dbReference>
<dbReference type="NCBIfam" id="TIGR00977">
    <property type="entry name" value="citramal_synth"/>
    <property type="match status" value="1"/>
</dbReference>
<dbReference type="PANTHER" id="PTHR43538:SF1">
    <property type="entry name" value="(R)-CITRAMALATE SYNTHASE"/>
    <property type="match status" value="1"/>
</dbReference>
<dbReference type="PANTHER" id="PTHR43538">
    <property type="entry name" value="ALPHA-IPM SYNTHASE/HOMOCITRATE SYNTHASE"/>
    <property type="match status" value="1"/>
</dbReference>
<dbReference type="Pfam" id="PF22617">
    <property type="entry name" value="HCS_D2"/>
    <property type="match status" value="1"/>
</dbReference>
<dbReference type="Pfam" id="PF00682">
    <property type="entry name" value="HMGL-like"/>
    <property type="match status" value="1"/>
</dbReference>
<dbReference type="Pfam" id="PF08502">
    <property type="entry name" value="LeuA_dimer"/>
    <property type="match status" value="1"/>
</dbReference>
<dbReference type="SMART" id="SM00917">
    <property type="entry name" value="LeuA_dimer"/>
    <property type="match status" value="1"/>
</dbReference>
<dbReference type="SUPFAM" id="SSF110921">
    <property type="entry name" value="2-isopropylmalate synthase LeuA, allosteric (dimerisation) domain"/>
    <property type="match status" value="1"/>
</dbReference>
<dbReference type="SUPFAM" id="SSF51569">
    <property type="entry name" value="Aldolase"/>
    <property type="match status" value="1"/>
</dbReference>
<dbReference type="PROSITE" id="PS00815">
    <property type="entry name" value="AIPM_HOMOCIT_SYNTH_1"/>
    <property type="match status" value="1"/>
</dbReference>
<dbReference type="PROSITE" id="PS50991">
    <property type="entry name" value="PYR_CT"/>
    <property type="match status" value="1"/>
</dbReference>
<accession>O66682</accession>
<gene>
    <name evidence="3" type="primary">cimA</name>
    <name type="ordered locus">aq_356</name>
</gene>
<sequence length="528" mass="59215">MAEKVYIYDTTLRDGSQMEGVSFSLEDKIRIAEKLDDFGIHYIEGGWPYANPKDNLFFQKAKKMNFKNAKLTAFGSTRRPNKKVSEDPQVESLIKAETPVVTIFGKSWDLHVTDALKTTLEENLNMIYETVEYLKRYVDEVIFDAEHFFDGYKSNPEYALQVLEAALKGGADWVVLCDTNGGTLPHEIYEITKKVKERFKDANVGIHAHNDSETAVANSLMAVLAGARQVHGTINGIGERTGNANLCSIIPNLQLKLGFDVIPQENLKKLTELANFVAEIINMPLPRNMPYVGESAFAHKGGVHASAVLKNAKTYEHINPELVGNKRKITVSDLAGRSNLVHKLKEFGIEIDPKSPELKKLIDKIKELEKEGYHFEAAEASLELLIKRHFGLVKDYFDFDAYRVLIAKRRDDSLPTSEATVRLSVEGVEEHTASLGNGPISALDRALRKALEEFYPNLKELQLIDYKVRIINESAGTSAKVRVLIESTDGKRKWGTVGVSENVIEASWIALRDSIVYKLMKDEEEGIL</sequence>
<organism>
    <name type="scientific">Aquifex aeolicus (strain VF5)</name>
    <dbReference type="NCBI Taxonomy" id="224324"/>
    <lineage>
        <taxon>Bacteria</taxon>
        <taxon>Pseudomonadati</taxon>
        <taxon>Aquificota</taxon>
        <taxon>Aquificia</taxon>
        <taxon>Aquificales</taxon>
        <taxon>Aquificaceae</taxon>
        <taxon>Aquifex</taxon>
    </lineage>
</organism>
<reference key="1">
    <citation type="journal article" date="1998" name="Nature">
        <title>The complete genome of the hyperthermophilic bacterium Aquifex aeolicus.</title>
        <authorList>
            <person name="Deckert G."/>
            <person name="Warren P.V."/>
            <person name="Gaasterland T."/>
            <person name="Young W.G."/>
            <person name="Lenox A.L."/>
            <person name="Graham D.E."/>
            <person name="Overbeek R."/>
            <person name="Snead M.A."/>
            <person name="Keller M."/>
            <person name="Aujay M."/>
            <person name="Huber R."/>
            <person name="Feldman R.A."/>
            <person name="Short J.M."/>
            <person name="Olsen G.J."/>
            <person name="Swanson R.V."/>
        </authorList>
    </citation>
    <scope>NUCLEOTIDE SEQUENCE [LARGE SCALE GENOMIC DNA]</scope>
    <source>
        <strain>VF5</strain>
    </source>
</reference>
<comment type="function">
    <text evidence="1">Catalyzes the condensation of pyruvate and acetyl-coenzyme A to form (R)-citramalate.</text>
</comment>
<comment type="catalytic activity">
    <reaction evidence="1">
        <text>pyruvate + acetyl-CoA + H2O = (3R)-citramalate + CoA + H(+)</text>
        <dbReference type="Rhea" id="RHEA:19045"/>
        <dbReference type="ChEBI" id="CHEBI:15361"/>
        <dbReference type="ChEBI" id="CHEBI:15377"/>
        <dbReference type="ChEBI" id="CHEBI:15378"/>
        <dbReference type="ChEBI" id="CHEBI:30934"/>
        <dbReference type="ChEBI" id="CHEBI:57287"/>
        <dbReference type="ChEBI" id="CHEBI:57288"/>
        <dbReference type="EC" id="2.3.3.21"/>
    </reaction>
</comment>
<comment type="pathway">
    <text evidence="1">Amino-acid biosynthesis; L-isoleucine biosynthesis; 2-oxobutanoate from pyruvate: step 1/3.</text>
</comment>
<comment type="similarity">
    <text evidence="3">Belongs to the alpha-IPM synthase/homocitrate synthase family.</text>
</comment>
<keyword id="KW-0028">Amino-acid biosynthesis</keyword>
<keyword id="KW-0100">Branched-chain amino acid biosynthesis</keyword>
<keyword id="KW-0412">Isoleucine biosynthesis</keyword>
<keyword id="KW-1185">Reference proteome</keyword>
<keyword id="KW-0808">Transferase</keyword>